<evidence type="ECO:0000250" key="1"/>
<evidence type="ECO:0000255" key="2"/>
<evidence type="ECO:0000269" key="3">
    <source>
    </source>
</evidence>
<evidence type="ECO:0000305" key="4"/>
<evidence type="ECO:0000305" key="5">
    <source>
    </source>
</evidence>
<name>KA132_ORTSC</name>
<organism evidence="4">
    <name type="scientific">Orthochirus scrobiculosus</name>
    <name type="common">Central Asian scorpion</name>
    <dbReference type="NCBI Taxonomy" id="6892"/>
    <lineage>
        <taxon>Eukaryota</taxon>
        <taxon>Metazoa</taxon>
        <taxon>Ecdysozoa</taxon>
        <taxon>Arthropoda</taxon>
        <taxon>Chelicerata</taxon>
        <taxon>Arachnida</taxon>
        <taxon>Scorpiones</taxon>
        <taxon>Buthida</taxon>
        <taxon>Buthoidea</taxon>
        <taxon>Buthidae</taxon>
        <taxon>Orthochirus</taxon>
    </lineage>
</organism>
<accession>P83244</accession>
<sequence>ACGPGCSGSCRQKGDRIKCINGSCHCYP</sequence>
<proteinExistence type="evidence at protein level"/>
<feature type="peptide" id="PRO_0000044910" description="Potassium channel toxin alpha-KTx 13.2">
    <location>
        <begin position="1"/>
        <end position="28"/>
    </location>
</feature>
<feature type="region of interest" description="Interaction with Ca(2+)-activated K(+) channels" evidence="2">
    <location>
        <begin position="17"/>
        <end position="24"/>
    </location>
</feature>
<feature type="site" description="Basic residue of the functional dyad" evidence="1">
    <location>
        <position position="18"/>
    </location>
</feature>
<feature type="site" description="Aromatic residue of the functional dyad" evidence="1">
    <location>
        <position position="27"/>
    </location>
</feature>
<feature type="disulfide bond" evidence="1">
    <location>
        <begin position="2"/>
        <end position="19"/>
    </location>
</feature>
<feature type="disulfide bond" evidence="1">
    <location>
        <begin position="6"/>
        <end position="24"/>
    </location>
</feature>
<feature type="disulfide bond" evidence="1">
    <location>
        <begin position="10"/>
        <end position="26"/>
    </location>
</feature>
<comment type="function">
    <text evidence="3">Potent and selective inhibitor of Kv1.2/KCNA2 potassium channels.</text>
</comment>
<comment type="subcellular location">
    <subcellularLocation>
        <location evidence="4">Secreted</location>
    </subcellularLocation>
</comment>
<comment type="tissue specificity">
    <text>Expressed by the venom gland.</text>
</comment>
<comment type="domain">
    <text evidence="4">Has the structural arrangement of an alpha-helix connected to antiparallel beta-sheets by disulfide bonds (CS-alpha/beta).</text>
</comment>
<comment type="mass spectrometry"/>
<comment type="miscellaneous">
    <text evidence="5">Negative results: does not block Kv1.1/KCNA1 and Kv1.3/KCNA3 potassium channels.</text>
</comment>
<comment type="similarity">
    <text evidence="4">Belongs to the short scorpion toxin superfamily. Potassium channel inhibitor family. Alpha-KTx 13 subfamily.</text>
</comment>
<reference evidence="4" key="1">
    <citation type="journal article" date="2001" name="Biochem. Biophys. Res. Commun.">
        <title>OsK2, a new selective inhibitor of Kv1.2 potassium channels purified from the venom of the scorpion Orthochirus scrobiculosus.</title>
        <authorList>
            <person name="Dudina E.E."/>
            <person name="Korolkova Y.V."/>
            <person name="Bocharova N.E."/>
            <person name="Koshelev S.G."/>
            <person name="Egorov T.A."/>
            <person name="Huys I."/>
            <person name="Tytgat J."/>
            <person name="Grishin E.V."/>
        </authorList>
    </citation>
    <scope>PROTEIN SEQUENCE</scope>
    <scope>FUNCTION</scope>
    <scope>MASS SPECTROMETRY</scope>
    <source>
        <tissue>Venom</tissue>
    </source>
</reference>
<dbReference type="SMR" id="P83244"/>
<dbReference type="GO" id="GO:0005576">
    <property type="term" value="C:extracellular region"/>
    <property type="evidence" value="ECO:0007669"/>
    <property type="project" value="UniProtKB-SubCell"/>
</dbReference>
<dbReference type="GO" id="GO:0019870">
    <property type="term" value="F:potassium channel inhibitor activity"/>
    <property type="evidence" value="ECO:0000314"/>
    <property type="project" value="UniProtKB"/>
</dbReference>
<dbReference type="GO" id="GO:0090729">
    <property type="term" value="F:toxin activity"/>
    <property type="evidence" value="ECO:0000314"/>
    <property type="project" value="UniProtKB"/>
</dbReference>
<dbReference type="GO" id="GO:0044562">
    <property type="term" value="P:envenomation resulting in negative regulation of voltage-gated potassium channel activity in another organism"/>
    <property type="evidence" value="ECO:0000314"/>
    <property type="project" value="UniProtKB"/>
</dbReference>
<protein>
    <recommendedName>
        <fullName>Potassium channel toxin alpha-KTx 13.2</fullName>
        <shortName>OsK-2</shortName>
        <shortName>OsK2</shortName>
    </recommendedName>
</protein>
<keyword id="KW-0903">Direct protein sequencing</keyword>
<keyword id="KW-1015">Disulfide bond</keyword>
<keyword id="KW-0872">Ion channel impairing toxin</keyword>
<keyword id="KW-0528">Neurotoxin</keyword>
<keyword id="KW-0632">Potassium channel impairing toxin</keyword>
<keyword id="KW-0964">Secreted</keyword>
<keyword id="KW-0800">Toxin</keyword>
<keyword id="KW-1220">Voltage-gated potassium channel impairing toxin</keyword>